<organism>
    <name type="scientific">Shigella boydii serotype 4 (strain Sb227)</name>
    <dbReference type="NCBI Taxonomy" id="300268"/>
    <lineage>
        <taxon>Bacteria</taxon>
        <taxon>Pseudomonadati</taxon>
        <taxon>Pseudomonadota</taxon>
        <taxon>Gammaproteobacteria</taxon>
        <taxon>Enterobacterales</taxon>
        <taxon>Enterobacteriaceae</taxon>
        <taxon>Shigella</taxon>
    </lineage>
</organism>
<keyword id="KW-0067">ATP-binding</keyword>
<keyword id="KW-0997">Cell inner membrane</keyword>
<keyword id="KW-1003">Cell membrane</keyword>
<keyword id="KW-0201">Cytochrome c-type biogenesis</keyword>
<keyword id="KW-0472">Membrane</keyword>
<keyword id="KW-0547">Nucleotide-binding</keyword>
<keyword id="KW-1278">Translocase</keyword>
<keyword id="KW-0813">Transport</keyword>
<dbReference type="EC" id="7.6.2.5" evidence="1"/>
<dbReference type="EMBL" id="CP000036">
    <property type="protein sequence ID" value="ABB66684.1"/>
    <property type="status" value="ALT_INIT"/>
    <property type="molecule type" value="Genomic_DNA"/>
</dbReference>
<dbReference type="RefSeq" id="WP_000525587.1">
    <property type="nucleotide sequence ID" value="NC_007613.1"/>
</dbReference>
<dbReference type="SMR" id="Q31Z24"/>
<dbReference type="GeneID" id="75206453"/>
<dbReference type="KEGG" id="sbo:SBO_2106"/>
<dbReference type="HOGENOM" id="CLU_000604_1_2_6"/>
<dbReference type="Proteomes" id="UP000007067">
    <property type="component" value="Chromosome"/>
</dbReference>
<dbReference type="GO" id="GO:0005886">
    <property type="term" value="C:plasma membrane"/>
    <property type="evidence" value="ECO:0007669"/>
    <property type="project" value="UniProtKB-SubCell"/>
</dbReference>
<dbReference type="GO" id="GO:0015439">
    <property type="term" value="F:ABC-type heme transporter activity"/>
    <property type="evidence" value="ECO:0007669"/>
    <property type="project" value="UniProtKB-EC"/>
</dbReference>
<dbReference type="GO" id="GO:0005524">
    <property type="term" value="F:ATP binding"/>
    <property type="evidence" value="ECO:0007669"/>
    <property type="project" value="UniProtKB-KW"/>
</dbReference>
<dbReference type="GO" id="GO:0016887">
    <property type="term" value="F:ATP hydrolysis activity"/>
    <property type="evidence" value="ECO:0007669"/>
    <property type="project" value="InterPro"/>
</dbReference>
<dbReference type="GO" id="GO:0017004">
    <property type="term" value="P:cytochrome complex assembly"/>
    <property type="evidence" value="ECO:0007669"/>
    <property type="project" value="UniProtKB-KW"/>
</dbReference>
<dbReference type="CDD" id="cd03231">
    <property type="entry name" value="ABC_CcmA_heme_exporter"/>
    <property type="match status" value="1"/>
</dbReference>
<dbReference type="FunFam" id="3.40.50.300:FF:001098">
    <property type="entry name" value="Cytochrome c biogenesis ATP-binding export protein CcmA"/>
    <property type="match status" value="1"/>
</dbReference>
<dbReference type="Gene3D" id="3.40.50.300">
    <property type="entry name" value="P-loop containing nucleotide triphosphate hydrolases"/>
    <property type="match status" value="1"/>
</dbReference>
<dbReference type="InterPro" id="IPR003593">
    <property type="entry name" value="AAA+_ATPase"/>
</dbReference>
<dbReference type="InterPro" id="IPR003439">
    <property type="entry name" value="ABC_transporter-like_ATP-bd"/>
</dbReference>
<dbReference type="InterPro" id="IPR017871">
    <property type="entry name" value="ABC_transporter-like_CS"/>
</dbReference>
<dbReference type="InterPro" id="IPR005895">
    <property type="entry name" value="ABC_transptr_haem_export_CcmA"/>
</dbReference>
<dbReference type="InterPro" id="IPR027417">
    <property type="entry name" value="P-loop_NTPase"/>
</dbReference>
<dbReference type="NCBIfam" id="TIGR01189">
    <property type="entry name" value="ccmA"/>
    <property type="match status" value="1"/>
</dbReference>
<dbReference type="NCBIfam" id="NF010061">
    <property type="entry name" value="PRK13538.1"/>
    <property type="match status" value="1"/>
</dbReference>
<dbReference type="PANTHER" id="PTHR43499">
    <property type="entry name" value="ABC TRANSPORTER I FAMILY MEMBER 1"/>
    <property type="match status" value="1"/>
</dbReference>
<dbReference type="PANTHER" id="PTHR43499:SF1">
    <property type="entry name" value="ABC TRANSPORTER I FAMILY MEMBER 1"/>
    <property type="match status" value="1"/>
</dbReference>
<dbReference type="Pfam" id="PF00005">
    <property type="entry name" value="ABC_tran"/>
    <property type="match status" value="1"/>
</dbReference>
<dbReference type="SMART" id="SM00382">
    <property type="entry name" value="AAA"/>
    <property type="match status" value="1"/>
</dbReference>
<dbReference type="SUPFAM" id="SSF52540">
    <property type="entry name" value="P-loop containing nucleoside triphosphate hydrolases"/>
    <property type="match status" value="1"/>
</dbReference>
<dbReference type="PROSITE" id="PS00211">
    <property type="entry name" value="ABC_TRANSPORTER_1"/>
    <property type="match status" value="1"/>
</dbReference>
<dbReference type="PROSITE" id="PS50893">
    <property type="entry name" value="ABC_TRANSPORTER_2"/>
    <property type="match status" value="1"/>
</dbReference>
<dbReference type="PROSITE" id="PS51243">
    <property type="entry name" value="CCMA"/>
    <property type="match status" value="1"/>
</dbReference>
<comment type="function">
    <text evidence="1">Part of the ABC transporter complex CcmAB involved in the biogenesis of c-type cytochromes; once thought to export heme, this seems not to be the case, but its exact role is uncertain. Responsible for energy coupling to the transport system.</text>
</comment>
<comment type="catalytic activity">
    <reaction evidence="1">
        <text>heme b(in) + ATP + H2O = heme b(out) + ADP + phosphate + H(+)</text>
        <dbReference type="Rhea" id="RHEA:19261"/>
        <dbReference type="ChEBI" id="CHEBI:15377"/>
        <dbReference type="ChEBI" id="CHEBI:15378"/>
        <dbReference type="ChEBI" id="CHEBI:30616"/>
        <dbReference type="ChEBI" id="CHEBI:43474"/>
        <dbReference type="ChEBI" id="CHEBI:60344"/>
        <dbReference type="ChEBI" id="CHEBI:456216"/>
        <dbReference type="EC" id="7.6.2.5"/>
    </reaction>
</comment>
<comment type="subunit">
    <text evidence="1">The complex is composed of two ATP-binding proteins (CcmA) and two transmembrane proteins (CcmB).</text>
</comment>
<comment type="subcellular location">
    <subcellularLocation>
        <location evidence="1">Cell inner membrane</location>
        <topology evidence="1">Peripheral membrane protein</topology>
    </subcellularLocation>
</comment>
<comment type="similarity">
    <text evidence="1">Belongs to the ABC transporter superfamily. CcmA exporter (TC 3.A.1.107) family.</text>
</comment>
<comment type="sequence caution" evidence="2">
    <conflict type="erroneous initiation">
        <sequence resource="EMBL-CDS" id="ABB66684"/>
    </conflict>
</comment>
<gene>
    <name evidence="1" type="primary">ccmA</name>
    <name type="ordered locus">SBO_2106</name>
</gene>
<proteinExistence type="inferred from homology"/>
<name>CCMA_SHIBS</name>
<accession>Q31Z24</accession>
<protein>
    <recommendedName>
        <fullName evidence="1">Cytochrome c biogenesis ATP-binding export protein CcmA</fullName>
        <ecNumber evidence="1">7.6.2.5</ecNumber>
    </recommendedName>
    <alternativeName>
        <fullName evidence="1">Heme exporter protein A</fullName>
    </alternativeName>
</protein>
<reference key="1">
    <citation type="journal article" date="2005" name="Nucleic Acids Res.">
        <title>Genome dynamics and diversity of Shigella species, the etiologic agents of bacillary dysentery.</title>
        <authorList>
            <person name="Yang F."/>
            <person name="Yang J."/>
            <person name="Zhang X."/>
            <person name="Chen L."/>
            <person name="Jiang Y."/>
            <person name="Yan Y."/>
            <person name="Tang X."/>
            <person name="Wang J."/>
            <person name="Xiong Z."/>
            <person name="Dong J."/>
            <person name="Xue Y."/>
            <person name="Zhu Y."/>
            <person name="Xu X."/>
            <person name="Sun L."/>
            <person name="Chen S."/>
            <person name="Nie H."/>
            <person name="Peng J."/>
            <person name="Xu J."/>
            <person name="Wang Y."/>
            <person name="Yuan Z."/>
            <person name="Wen Y."/>
            <person name="Yao Z."/>
            <person name="Shen Y."/>
            <person name="Qiang B."/>
            <person name="Hou Y."/>
            <person name="Yu J."/>
            <person name="Jin Q."/>
        </authorList>
    </citation>
    <scope>NUCLEOTIDE SEQUENCE [LARGE SCALE GENOMIC DNA]</scope>
    <source>
        <strain>Sb227</strain>
    </source>
</reference>
<feature type="chain" id="PRO_0000271959" description="Cytochrome c biogenesis ATP-binding export protein CcmA">
    <location>
        <begin position="1"/>
        <end position="207"/>
    </location>
</feature>
<feature type="domain" description="ABC transporter" evidence="1">
    <location>
        <begin position="4"/>
        <end position="207"/>
    </location>
</feature>
<feature type="binding site" evidence="1">
    <location>
        <begin position="36"/>
        <end position="43"/>
    </location>
    <ligand>
        <name>ATP</name>
        <dbReference type="ChEBI" id="CHEBI:30616"/>
    </ligand>
</feature>
<evidence type="ECO:0000255" key="1">
    <source>
        <dbReference type="HAMAP-Rule" id="MF_01707"/>
    </source>
</evidence>
<evidence type="ECO:0000305" key="2"/>
<sequence length="207" mass="23053">MGMLEARELLCERDERTLFSGLSFTLNAGEWVQITGSNGAGKTTLLRLLTGLSRPDAGEVLWQGQPLHQVRDSYHQNLLWIGHQPGIKTRLTALENLHFYHRDGDTAQCLEALAQAGLAGFEDIPVNQLSAGQQRRVALARLWLTRATLWILDEPFTAIDVNGVDRLTQRMAQHTEQGGIVILTTHQPLNVAESKIRRISLTQTRAA</sequence>